<proteinExistence type="inferred from homology"/>
<geneLocation type="chloroplast"/>
<sequence>MTQSNPNEQSVELNRTSLYWGLLLIFVLAVLFSNYFFN</sequence>
<reference key="1">
    <citation type="submission" date="2002-09" db="EMBL/GenBank/DDBJ databases">
        <title>Phylogenetic relationships among the major lineages of Asparagales based on a large chloroplast data set.</title>
        <authorList>
            <person name="McPherson M.A."/>
            <person name="Rai H.S."/>
            <person name="Wong W.A."/>
            <person name="Graham S.W."/>
        </authorList>
    </citation>
    <scope>NUCLEOTIDE SEQUENCE [GENOMIC DNA]</scope>
</reference>
<protein>
    <recommendedName>
        <fullName evidence="1">Photosystem II reaction center protein L</fullName>
        <shortName evidence="1">PSII-L</shortName>
    </recommendedName>
</protein>
<comment type="function">
    <text evidence="1">One of the components of the core complex of photosystem II (PSII). PSII is a light-driven water:plastoquinone oxidoreductase that uses light energy to abstract electrons from H(2)O, generating O(2) and a proton gradient subsequently used for ATP formation. It consists of a core antenna complex that captures photons, and an electron transfer chain that converts photonic excitation into a charge separation. This subunit is found at the monomer-monomer interface and is required for correct PSII assembly and/or dimerization.</text>
</comment>
<comment type="subunit">
    <text evidence="1">PSII is composed of 1 copy each of membrane proteins PsbA, PsbB, PsbC, PsbD, PsbE, PsbF, PsbH, PsbI, PsbJ, PsbK, PsbL, PsbM, PsbT, PsbX, PsbY, PsbZ, Psb30/Ycf12, at least 3 peripheral proteins of the oxygen-evolving complex and a large number of cofactors. It forms dimeric complexes.</text>
</comment>
<comment type="subcellular location">
    <subcellularLocation>
        <location evidence="1">Plastid</location>
        <location evidence="1">Chloroplast thylakoid membrane</location>
        <topology evidence="1">Single-pass membrane protein</topology>
    </subcellularLocation>
</comment>
<comment type="similarity">
    <text evidence="1">Belongs to the PsbL family.</text>
</comment>
<name>PSBL_TYPAN</name>
<accession>Q67HJ6</accession>
<feature type="chain" id="PRO_0000219780" description="Photosystem II reaction center protein L">
    <location>
        <begin position="1"/>
        <end position="38"/>
    </location>
</feature>
<feature type="transmembrane region" description="Helical" evidence="1">
    <location>
        <begin position="17"/>
        <end position="37"/>
    </location>
</feature>
<evidence type="ECO:0000255" key="1">
    <source>
        <dbReference type="HAMAP-Rule" id="MF_01317"/>
    </source>
</evidence>
<keyword id="KW-0150">Chloroplast</keyword>
<keyword id="KW-0472">Membrane</keyword>
<keyword id="KW-0602">Photosynthesis</keyword>
<keyword id="KW-0604">Photosystem II</keyword>
<keyword id="KW-0934">Plastid</keyword>
<keyword id="KW-0674">Reaction center</keyword>
<keyword id="KW-0793">Thylakoid</keyword>
<keyword id="KW-0812">Transmembrane</keyword>
<keyword id="KW-1133">Transmembrane helix</keyword>
<dbReference type="EMBL" id="AY147564">
    <property type="protein sequence ID" value="AAN32358.1"/>
    <property type="molecule type" value="Genomic_DNA"/>
</dbReference>
<dbReference type="SMR" id="Q67HJ6"/>
<dbReference type="GO" id="GO:0009535">
    <property type="term" value="C:chloroplast thylakoid membrane"/>
    <property type="evidence" value="ECO:0007669"/>
    <property type="project" value="UniProtKB-SubCell"/>
</dbReference>
<dbReference type="GO" id="GO:0009539">
    <property type="term" value="C:photosystem II reaction center"/>
    <property type="evidence" value="ECO:0007669"/>
    <property type="project" value="InterPro"/>
</dbReference>
<dbReference type="GO" id="GO:0015979">
    <property type="term" value="P:photosynthesis"/>
    <property type="evidence" value="ECO:0007669"/>
    <property type="project" value="UniProtKB-UniRule"/>
</dbReference>
<dbReference type="HAMAP" id="MF_01317">
    <property type="entry name" value="PSII_PsbL"/>
    <property type="match status" value="1"/>
</dbReference>
<dbReference type="InterPro" id="IPR003372">
    <property type="entry name" value="PSII_PsbL"/>
</dbReference>
<dbReference type="InterPro" id="IPR037266">
    <property type="entry name" value="PSII_PsbL_sf"/>
</dbReference>
<dbReference type="NCBIfam" id="NF001972">
    <property type="entry name" value="PRK00753.1"/>
    <property type="match status" value="1"/>
</dbReference>
<dbReference type="Pfam" id="PF02419">
    <property type="entry name" value="PsbL"/>
    <property type="match status" value="1"/>
</dbReference>
<dbReference type="SUPFAM" id="SSF161017">
    <property type="entry name" value="Photosystem II reaction center protein L, PsbL"/>
    <property type="match status" value="1"/>
</dbReference>
<gene>
    <name evidence="1" type="primary">psbL</name>
</gene>
<organism>
    <name type="scientific">Typha angustifolia</name>
    <name type="common">Narrow leaf cattail</name>
    <dbReference type="NCBI Taxonomy" id="59011"/>
    <lineage>
        <taxon>Eukaryota</taxon>
        <taxon>Viridiplantae</taxon>
        <taxon>Streptophyta</taxon>
        <taxon>Embryophyta</taxon>
        <taxon>Tracheophyta</taxon>
        <taxon>Spermatophyta</taxon>
        <taxon>Magnoliopsida</taxon>
        <taxon>Liliopsida</taxon>
        <taxon>Poales</taxon>
        <taxon>Typhaceae</taxon>
        <taxon>Typha</taxon>
    </lineage>
</organism>